<protein>
    <recommendedName>
        <fullName evidence="1">Integration host factor subunit beta</fullName>
        <shortName evidence="1">IHF-beta</shortName>
    </recommendedName>
</protein>
<feature type="chain" id="PRO_0000105081" description="Integration host factor subunit beta">
    <location>
        <begin position="1"/>
        <end position="94"/>
    </location>
</feature>
<comment type="function">
    <text evidence="1">This protein is one of the two subunits of integration host factor, a specific DNA-binding protein that functions in genetic recombination as well as in transcriptional and translational control.</text>
</comment>
<comment type="subunit">
    <text evidence="1">Heterodimer of an alpha and a beta chain.</text>
</comment>
<comment type="similarity">
    <text evidence="1">Belongs to the bacterial histone-like protein family.</text>
</comment>
<reference key="1">
    <citation type="journal article" date="2001" name="Nature">
        <title>Genome sequence of Yersinia pestis, the causative agent of plague.</title>
        <authorList>
            <person name="Parkhill J."/>
            <person name="Wren B.W."/>
            <person name="Thomson N.R."/>
            <person name="Titball R.W."/>
            <person name="Holden M.T.G."/>
            <person name="Prentice M.B."/>
            <person name="Sebaihia M."/>
            <person name="James K.D."/>
            <person name="Churcher C.M."/>
            <person name="Mungall K.L."/>
            <person name="Baker S."/>
            <person name="Basham D."/>
            <person name="Bentley S.D."/>
            <person name="Brooks K."/>
            <person name="Cerdeno-Tarraga A.-M."/>
            <person name="Chillingworth T."/>
            <person name="Cronin A."/>
            <person name="Davies R.M."/>
            <person name="Davis P."/>
            <person name="Dougan G."/>
            <person name="Feltwell T."/>
            <person name="Hamlin N."/>
            <person name="Holroyd S."/>
            <person name="Jagels K."/>
            <person name="Karlyshev A.V."/>
            <person name="Leather S."/>
            <person name="Moule S."/>
            <person name="Oyston P.C.F."/>
            <person name="Quail M.A."/>
            <person name="Rutherford K.M."/>
            <person name="Simmonds M."/>
            <person name="Skelton J."/>
            <person name="Stevens K."/>
            <person name="Whitehead S."/>
            <person name="Barrell B.G."/>
        </authorList>
    </citation>
    <scope>NUCLEOTIDE SEQUENCE [LARGE SCALE GENOMIC DNA]</scope>
    <source>
        <strain>CO-92 / Biovar Orientalis</strain>
    </source>
</reference>
<reference key="2">
    <citation type="journal article" date="2002" name="J. Bacteriol.">
        <title>Genome sequence of Yersinia pestis KIM.</title>
        <authorList>
            <person name="Deng W."/>
            <person name="Burland V."/>
            <person name="Plunkett G. III"/>
            <person name="Boutin A."/>
            <person name="Mayhew G.F."/>
            <person name="Liss P."/>
            <person name="Perna N.T."/>
            <person name="Rose D.J."/>
            <person name="Mau B."/>
            <person name="Zhou S."/>
            <person name="Schwartz D.C."/>
            <person name="Fetherston J.D."/>
            <person name="Lindler L.E."/>
            <person name="Brubaker R.R."/>
            <person name="Plano G.V."/>
            <person name="Straley S.C."/>
            <person name="McDonough K.A."/>
            <person name="Nilles M.L."/>
            <person name="Matson J.S."/>
            <person name="Blattner F.R."/>
            <person name="Perry R.D."/>
        </authorList>
    </citation>
    <scope>NUCLEOTIDE SEQUENCE [LARGE SCALE GENOMIC DNA]</scope>
    <source>
        <strain>KIM10+ / Biovar Mediaevalis</strain>
    </source>
</reference>
<reference key="3">
    <citation type="journal article" date="2004" name="DNA Res.">
        <title>Complete genome sequence of Yersinia pestis strain 91001, an isolate avirulent to humans.</title>
        <authorList>
            <person name="Song Y."/>
            <person name="Tong Z."/>
            <person name="Wang J."/>
            <person name="Wang L."/>
            <person name="Guo Z."/>
            <person name="Han Y."/>
            <person name="Zhang J."/>
            <person name="Pei D."/>
            <person name="Zhou D."/>
            <person name="Qin H."/>
            <person name="Pang X."/>
            <person name="Han Y."/>
            <person name="Zhai J."/>
            <person name="Li M."/>
            <person name="Cui B."/>
            <person name="Qi Z."/>
            <person name="Jin L."/>
            <person name="Dai R."/>
            <person name="Chen F."/>
            <person name="Li S."/>
            <person name="Ye C."/>
            <person name="Du Z."/>
            <person name="Lin W."/>
            <person name="Wang J."/>
            <person name="Yu J."/>
            <person name="Yang H."/>
            <person name="Wang J."/>
            <person name="Huang P."/>
            <person name="Yang R."/>
        </authorList>
    </citation>
    <scope>NUCLEOTIDE SEQUENCE [LARGE SCALE GENOMIC DNA]</scope>
    <source>
        <strain>91001 / Biovar Mediaevalis</strain>
    </source>
</reference>
<keyword id="KW-0233">DNA recombination</keyword>
<keyword id="KW-0238">DNA-binding</keyword>
<keyword id="KW-1185">Reference proteome</keyword>
<keyword id="KW-0804">Transcription</keyword>
<keyword id="KW-0805">Transcription regulation</keyword>
<keyword id="KW-0810">Translation regulation</keyword>
<gene>
    <name evidence="1" type="primary">ihfB</name>
    <name evidence="1" type="synonym">himD</name>
    <name type="ordered locus">YPO1393</name>
    <name type="ordered locus">y2779</name>
    <name type="ordered locus">YP_1200</name>
</gene>
<sequence length="94" mass="10560">MTKSELIERLAGQQSHVPAKVVEDAVKEMLEHMAGTLAEGERIEIRGFGSFSLHYRAPRVGRNPKTGDKVELEGKYVPHFKPGKELRDRANIYG</sequence>
<name>IHFB_YERPE</name>
<proteinExistence type="inferred from homology"/>
<organism>
    <name type="scientific">Yersinia pestis</name>
    <dbReference type="NCBI Taxonomy" id="632"/>
    <lineage>
        <taxon>Bacteria</taxon>
        <taxon>Pseudomonadati</taxon>
        <taxon>Pseudomonadota</taxon>
        <taxon>Gammaproteobacteria</taxon>
        <taxon>Enterobacterales</taxon>
        <taxon>Yersiniaceae</taxon>
        <taxon>Yersinia</taxon>
    </lineage>
</organism>
<dbReference type="EMBL" id="AL590842">
    <property type="protein sequence ID" value="CAL20045.1"/>
    <property type="molecule type" value="Genomic_DNA"/>
</dbReference>
<dbReference type="EMBL" id="AE009952">
    <property type="protein sequence ID" value="AAM86331.1"/>
    <property type="molecule type" value="Genomic_DNA"/>
</dbReference>
<dbReference type="EMBL" id="AE017042">
    <property type="protein sequence ID" value="AAS61443.1"/>
    <property type="molecule type" value="Genomic_DNA"/>
</dbReference>
<dbReference type="PIR" id="AC0170">
    <property type="entry name" value="AC0170"/>
</dbReference>
<dbReference type="RefSeq" id="WP_002211322.1">
    <property type="nucleotide sequence ID" value="NZ_WUCM01000045.1"/>
</dbReference>
<dbReference type="RefSeq" id="YP_002346416.1">
    <property type="nucleotide sequence ID" value="NC_003143.1"/>
</dbReference>
<dbReference type="SMR" id="Q8ZGB1"/>
<dbReference type="STRING" id="214092.YPO1393"/>
<dbReference type="PaxDb" id="214092-YPO1393"/>
<dbReference type="DNASU" id="1147726"/>
<dbReference type="EnsemblBacteria" id="AAS61443">
    <property type="protein sequence ID" value="AAS61443"/>
    <property type="gene ID" value="YP_1200"/>
</dbReference>
<dbReference type="GeneID" id="96664989"/>
<dbReference type="KEGG" id="ype:YPO1393"/>
<dbReference type="KEGG" id="ypk:y2779"/>
<dbReference type="KEGG" id="ypm:YP_1200"/>
<dbReference type="PATRIC" id="fig|214092.21.peg.1716"/>
<dbReference type="eggNOG" id="COG0776">
    <property type="taxonomic scope" value="Bacteria"/>
</dbReference>
<dbReference type="HOGENOM" id="CLU_105066_2_0_6"/>
<dbReference type="OMA" id="DQKSVPF"/>
<dbReference type="OrthoDB" id="9804203at2"/>
<dbReference type="Proteomes" id="UP000000815">
    <property type="component" value="Chromosome"/>
</dbReference>
<dbReference type="Proteomes" id="UP000001019">
    <property type="component" value="Chromosome"/>
</dbReference>
<dbReference type="Proteomes" id="UP000002490">
    <property type="component" value="Chromosome"/>
</dbReference>
<dbReference type="GO" id="GO:0005694">
    <property type="term" value="C:chromosome"/>
    <property type="evidence" value="ECO:0007669"/>
    <property type="project" value="InterPro"/>
</dbReference>
<dbReference type="GO" id="GO:0005829">
    <property type="term" value="C:cytosol"/>
    <property type="evidence" value="ECO:0000318"/>
    <property type="project" value="GO_Central"/>
</dbReference>
<dbReference type="GO" id="GO:0003677">
    <property type="term" value="F:DNA binding"/>
    <property type="evidence" value="ECO:0000318"/>
    <property type="project" value="GO_Central"/>
</dbReference>
<dbReference type="GO" id="GO:0030527">
    <property type="term" value="F:structural constituent of chromatin"/>
    <property type="evidence" value="ECO:0007669"/>
    <property type="project" value="InterPro"/>
</dbReference>
<dbReference type="GO" id="GO:0006310">
    <property type="term" value="P:DNA recombination"/>
    <property type="evidence" value="ECO:0007669"/>
    <property type="project" value="UniProtKB-UniRule"/>
</dbReference>
<dbReference type="GO" id="GO:0006355">
    <property type="term" value="P:regulation of DNA-templated transcription"/>
    <property type="evidence" value="ECO:0007669"/>
    <property type="project" value="UniProtKB-UniRule"/>
</dbReference>
<dbReference type="GO" id="GO:0006417">
    <property type="term" value="P:regulation of translation"/>
    <property type="evidence" value="ECO:0007669"/>
    <property type="project" value="UniProtKB-UniRule"/>
</dbReference>
<dbReference type="CDD" id="cd13836">
    <property type="entry name" value="IHF_B"/>
    <property type="match status" value="1"/>
</dbReference>
<dbReference type="FunFam" id="4.10.520.10:FF:000003">
    <property type="entry name" value="Integration host factor subunit beta"/>
    <property type="match status" value="1"/>
</dbReference>
<dbReference type="Gene3D" id="4.10.520.10">
    <property type="entry name" value="IHF-like DNA-binding proteins"/>
    <property type="match status" value="1"/>
</dbReference>
<dbReference type="HAMAP" id="MF_00381">
    <property type="entry name" value="IHF_beta"/>
    <property type="match status" value="1"/>
</dbReference>
<dbReference type="InterPro" id="IPR000119">
    <property type="entry name" value="Hist_DNA-bd"/>
</dbReference>
<dbReference type="InterPro" id="IPR020816">
    <property type="entry name" value="Histone-like_DNA-bd_CS"/>
</dbReference>
<dbReference type="InterPro" id="IPR010992">
    <property type="entry name" value="IHF-like_DNA-bd_dom_sf"/>
</dbReference>
<dbReference type="InterPro" id="IPR005685">
    <property type="entry name" value="IHF_beta"/>
</dbReference>
<dbReference type="NCBIfam" id="TIGR00988">
    <property type="entry name" value="hip"/>
    <property type="match status" value="1"/>
</dbReference>
<dbReference type="NCBIfam" id="NF001222">
    <property type="entry name" value="PRK00199.1"/>
    <property type="match status" value="1"/>
</dbReference>
<dbReference type="PANTHER" id="PTHR33175">
    <property type="entry name" value="DNA-BINDING PROTEIN HU"/>
    <property type="match status" value="1"/>
</dbReference>
<dbReference type="PANTHER" id="PTHR33175:SF5">
    <property type="entry name" value="INTEGRATION HOST FACTOR SUBUNIT BETA"/>
    <property type="match status" value="1"/>
</dbReference>
<dbReference type="Pfam" id="PF00216">
    <property type="entry name" value="Bac_DNA_binding"/>
    <property type="match status" value="1"/>
</dbReference>
<dbReference type="PRINTS" id="PR01727">
    <property type="entry name" value="DNABINDINGHU"/>
</dbReference>
<dbReference type="SMART" id="SM00411">
    <property type="entry name" value="BHL"/>
    <property type="match status" value="1"/>
</dbReference>
<dbReference type="SUPFAM" id="SSF47729">
    <property type="entry name" value="IHF-like DNA-binding proteins"/>
    <property type="match status" value="1"/>
</dbReference>
<dbReference type="PROSITE" id="PS00045">
    <property type="entry name" value="HISTONE_LIKE"/>
    <property type="match status" value="1"/>
</dbReference>
<accession>Q8ZGB1</accession>
<accession>Q0WH22</accession>
<evidence type="ECO:0000255" key="1">
    <source>
        <dbReference type="HAMAP-Rule" id="MF_00381"/>
    </source>
</evidence>